<gene>
    <name type="ordered locus">BT_4395</name>
</gene>
<comment type="function">
    <text evidence="3">Can hydrolyze the glycosidic link of O-GlcNAcylated proteins. Can use p-nitrophenyl-beta-GlcNAc and 4-methylumbelliferone-GlcNAc as substrates (in vitro).</text>
</comment>
<comment type="catalytic activity">
    <reaction evidence="3">
        <text>3-O-(N-acetyl-beta-D-glucosaminyl)-L-seryl-[protein] + H2O = N-acetyl-D-glucosamine + L-seryl-[protein]</text>
        <dbReference type="Rhea" id="RHEA:48876"/>
        <dbReference type="Rhea" id="RHEA-COMP:9863"/>
        <dbReference type="Rhea" id="RHEA-COMP:12251"/>
        <dbReference type="ChEBI" id="CHEBI:15377"/>
        <dbReference type="ChEBI" id="CHEBI:29999"/>
        <dbReference type="ChEBI" id="CHEBI:90838"/>
        <dbReference type="ChEBI" id="CHEBI:506227"/>
        <dbReference type="EC" id="3.2.1.169"/>
    </reaction>
</comment>
<comment type="catalytic activity">
    <reaction evidence="3">
        <text>3-O-(N-acetyl-beta-D-glucosaminyl)-L-threonyl-[protein] + H2O = L-threonyl-[protein] + N-acetyl-D-glucosamine</text>
        <dbReference type="Rhea" id="RHEA:48892"/>
        <dbReference type="Rhea" id="RHEA-COMP:11060"/>
        <dbReference type="Rhea" id="RHEA-COMP:12252"/>
        <dbReference type="ChEBI" id="CHEBI:15377"/>
        <dbReference type="ChEBI" id="CHEBI:30013"/>
        <dbReference type="ChEBI" id="CHEBI:90840"/>
        <dbReference type="ChEBI" id="CHEBI:506227"/>
        <dbReference type="EC" id="3.2.1.169"/>
    </reaction>
</comment>
<comment type="activity regulation">
    <text evidence="3">Inhibited by 1,2-dideoxy-2'-methyl-alpha-D-glucopyranoso-[2,1-d]-delta 2'-thiazoline (NAG-thiazoline) and O-(2-acetamido-2-deoxy-D-glucopyranosylidene)amino-N-phenyl-carbamate (PUGNAc). Not inhibited by Streptozotocin.</text>
</comment>
<comment type="biophysicochemical properties">
    <kinetics>
        <KM evidence="3">0.3 mM for p-nitrophenyl-O-GlcNAc (pNP-O-GlcNAc) (at pH 7.4)</KM>
        <KM evidence="3">0.28 mM for p-nitrophenyl-O-GlcNAc (pNP-O-GlcNAc) (at pH 6.5)</KM>
        <Vmax evidence="3">3.2 umol/min/mg enzyme (at pH 7.4)</Vmax>
        <Vmax evidence="3">19.9 umol/min/mg enzyme (at pH 6.5)</Vmax>
    </kinetics>
    <phDependence>
        <text evidence="3">Optimum pH is 6.0.</text>
    </phDependence>
</comment>
<comment type="subunit">
    <text evidence="3">Homodimer.</text>
</comment>
<comment type="interaction">
    <interactant intactId="EBI-15576571">
        <id>Q89ZI2</id>
    </interactant>
    <interactant intactId="EBI-15576571">
        <id>Q89ZI2</id>
        <label>BT_4395</label>
    </interactant>
    <organismsDiffer>false</organismsDiffer>
    <experiments>2</experiments>
</comment>
<comment type="miscellaneous">
    <text evidence="4">Metal-binding observed in X-ray crystal structures is artifactual.</text>
</comment>
<comment type="similarity">
    <text evidence="2">Belongs to the glycosyl hydrolase 84 family.</text>
</comment>
<evidence type="ECO:0000255" key="1"/>
<evidence type="ECO:0000255" key="2">
    <source>
        <dbReference type="PROSITE-ProRule" id="PRU01353"/>
    </source>
</evidence>
<evidence type="ECO:0000269" key="3">
    <source>
    </source>
</evidence>
<evidence type="ECO:0000305" key="4"/>
<evidence type="ECO:0000312" key="5">
    <source>
        <dbReference type="EMBL" id="AAO79500.1"/>
    </source>
</evidence>
<evidence type="ECO:0007829" key="6">
    <source>
        <dbReference type="PDB" id="5ABF"/>
    </source>
</evidence>
<evidence type="ECO:0007829" key="7">
    <source>
        <dbReference type="PDB" id="5FKY"/>
    </source>
</evidence>
<evidence type="ECO:0007829" key="8">
    <source>
        <dbReference type="PDB" id="5FL1"/>
    </source>
</evidence>
<evidence type="ECO:0007829" key="9">
    <source>
        <dbReference type="PDB" id="5MI4"/>
    </source>
</evidence>
<name>OGA_BACTN</name>
<proteinExistence type="evidence at protein level"/>
<sequence length="737" mass="84485">MKNNKIYLLGACLLCAVTTFAQNVSLQPPPQQLIVQNKTIDLPAVYQLNGGEEANPHAVKVLKELLSGKQSSKKGMLISIGEKGDKSVRKYSRQIPDHKEGYYLSVNEKEIVLAGNDERGTYYALQTFAQLLKDGKLPEVEIKDYPSVRYRGVVEGFYGTPWSHQARLSQLKFYGKNKMNTYIYGPKDDPYHSAPNWRLPYPDKEAAQLQELVAVANENEVDFVWAIHPGQDIKWNKEDRDLLLAKFEKMYQLGVRSFAVFFDDISGEGTNPQKQAELLNYIDEKFAQVKPDINQLVMCPTEYNKSWSNPNGNYLTTLGDKLNPSIQIMWTGDRVISDITRDGISWINERIKRPAYIWWNFPVSDYVRDHLLLGPVYGNDTTIAKEMSGFVTNPMEHAESSKIAIYSVASYAWNPAKYDTWQTWKDAIRTILPSAAEELECFAMHNSDLGPNGHGYRREESMDIQPAAERFLKAFKEGKNYDKADFETLQYTFERMKESADILLMNTENKPLIVEITPWVHQFKLTAEMGEEVLKMVEGRNESYFLRKYNHVKALQQQMFYIDQTSNQNPYQPGVKTATRVIKPLIDRTFATVVKFFNQKFNAHLDATTDYMPHKMISNVEQIKNLPLQVKANRVLISPANEVVKWAAGNSVEIELDAIYPGENIQINFGKDAPCTWGRLEISTDGKEWKTVDLKQKESRLSAGLQKAPVKFVRFTNVSDEEQQVYLRQFVLTIEKK</sequence>
<feature type="signal peptide" evidence="1">
    <location>
        <begin position="1"/>
        <end position="21"/>
    </location>
</feature>
<feature type="chain" id="PRO_0000257984" description="O-GlcNAcase BT_4395">
    <location>
        <begin position="22"/>
        <end position="737"/>
    </location>
</feature>
<feature type="domain" description="GH84" evidence="2">
    <location>
        <begin position="149"/>
        <end position="416"/>
    </location>
</feature>
<feature type="region of interest" description="Catalytic domain" evidence="3">
    <location>
        <begin position="148"/>
        <end position="433"/>
    </location>
</feature>
<feature type="active site" description="Proton donor" evidence="2 3">
    <location>
        <position position="264"/>
    </location>
</feature>
<feature type="binding site" evidence="3">
    <location>
        <position position="156"/>
    </location>
    <ligand>
        <name>a protein</name>
        <dbReference type="ChEBI" id="CHEBI:16541"/>
    </ligand>
</feature>
<feature type="binding site" evidence="3">
    <location>
        <position position="187"/>
    </location>
    <ligand>
        <name>a protein</name>
        <dbReference type="ChEBI" id="CHEBI:16541"/>
    </ligand>
</feature>
<feature type="binding site" evidence="3">
    <location>
        <position position="263"/>
    </location>
    <ligand>
        <name>a protein</name>
        <dbReference type="ChEBI" id="CHEBI:16541"/>
    </ligand>
</feature>
<feature type="binding site" evidence="3">
    <location>
        <position position="303"/>
    </location>
    <ligand>
        <name>a protein</name>
        <dbReference type="ChEBI" id="CHEBI:16541"/>
    </ligand>
</feature>
<feature type="binding site" evidence="3">
    <location>
        <begin position="358"/>
        <end position="360"/>
    </location>
    <ligand>
        <name>a protein</name>
        <dbReference type="ChEBI" id="CHEBI:16541"/>
    </ligand>
</feature>
<feature type="binding site" evidence="3">
    <location>
        <position position="365"/>
    </location>
    <ligand>
        <name>a protein</name>
        <dbReference type="ChEBI" id="CHEBI:16541"/>
    </ligand>
</feature>
<feature type="binding site" evidence="3">
    <location>
        <position position="393"/>
    </location>
    <ligand>
        <name>a protein</name>
        <dbReference type="ChEBI" id="CHEBI:16541"/>
    </ligand>
</feature>
<feature type="mutagenesis site" description="99% decrease in activity for pNP-O-GlcNAc." evidence="3">
    <original>Y</original>
    <variation>F</variation>
    <location>
        <position position="158"/>
    </location>
</feature>
<feature type="mutagenesis site" description="99% decrease in activity for pNP-O-GlcNAc." evidence="3">
    <original>D</original>
    <variation>A</variation>
    <location>
        <position position="263"/>
    </location>
</feature>
<feature type="mutagenesis site" description="99% decrease in activity for pNP-O-GlcNAc." evidence="3">
    <original>D</original>
    <variation>N</variation>
    <location>
        <position position="263"/>
    </location>
</feature>
<feature type="mutagenesis site" description="99% decrease in activity for pNP-O-GlcNAc." evidence="3">
    <original>D</original>
    <variation>A</variation>
    <location>
        <position position="264"/>
    </location>
</feature>
<feature type="mutagenesis site" description="99% decrease in activity for pNP-O-GlcNAc." evidence="3">
    <original>D</original>
    <variation>N</variation>
    <location>
        <position position="264"/>
    </location>
</feature>
<feature type="mutagenesis site" description="113% increase in activity for pNP-O-GlcNAc." evidence="3">
    <original>Y</original>
    <variation>F</variation>
    <location>
        <position position="303"/>
    </location>
</feature>
<feature type="mutagenesis site" description="95% decrease in activity for pNP-O-GlcNAc." evidence="3">
    <original>N</original>
    <variation>A</variation>
    <location>
        <position position="393"/>
    </location>
</feature>
<feature type="strand" evidence="7">
    <location>
        <begin position="31"/>
        <end position="41"/>
    </location>
</feature>
<feature type="strand" evidence="7">
    <location>
        <begin position="44"/>
        <end position="50"/>
    </location>
</feature>
<feature type="turn" evidence="7">
    <location>
        <begin position="51"/>
        <end position="53"/>
    </location>
</feature>
<feature type="helix" evidence="7">
    <location>
        <begin position="56"/>
        <end position="66"/>
    </location>
</feature>
<feature type="strand" evidence="9">
    <location>
        <begin position="69"/>
        <end position="71"/>
    </location>
</feature>
<feature type="strand" evidence="7">
    <location>
        <begin position="73"/>
        <end position="82"/>
    </location>
</feature>
<feature type="helix" evidence="7">
    <location>
        <begin position="86"/>
        <end position="91"/>
    </location>
</feature>
<feature type="turn" evidence="7">
    <location>
        <begin position="92"/>
        <end position="94"/>
    </location>
</feature>
<feature type="strand" evidence="7">
    <location>
        <begin position="102"/>
        <end position="106"/>
    </location>
</feature>
<feature type="strand" evidence="7">
    <location>
        <begin position="108"/>
        <end position="117"/>
    </location>
</feature>
<feature type="helix" evidence="7">
    <location>
        <begin position="118"/>
        <end position="131"/>
    </location>
</feature>
<feature type="strand" evidence="7">
    <location>
        <begin position="136"/>
        <end position="144"/>
    </location>
</feature>
<feature type="strand" evidence="7">
    <location>
        <begin position="147"/>
        <end position="155"/>
    </location>
</feature>
<feature type="strand" evidence="7">
    <location>
        <begin position="158"/>
        <end position="160"/>
    </location>
</feature>
<feature type="helix" evidence="7">
    <location>
        <begin position="164"/>
        <end position="176"/>
    </location>
</feature>
<feature type="strand" evidence="7">
    <location>
        <begin position="181"/>
        <end position="184"/>
    </location>
</feature>
<feature type="turn" evidence="7">
    <location>
        <begin position="190"/>
        <end position="192"/>
    </location>
</feature>
<feature type="strand" evidence="6">
    <location>
        <begin position="193"/>
        <end position="195"/>
    </location>
</feature>
<feature type="helix" evidence="7">
    <location>
        <begin position="196"/>
        <end position="198"/>
    </location>
</feature>
<feature type="helix" evidence="7">
    <location>
        <begin position="203"/>
        <end position="218"/>
    </location>
</feature>
<feature type="strand" evidence="7">
    <location>
        <begin position="222"/>
        <end position="227"/>
    </location>
</feature>
<feature type="turn" evidence="7">
    <location>
        <begin position="230"/>
        <end position="232"/>
    </location>
</feature>
<feature type="helix" evidence="7">
    <location>
        <begin position="237"/>
        <end position="252"/>
    </location>
</feature>
<feature type="strand" evidence="7">
    <location>
        <begin position="257"/>
        <end position="261"/>
    </location>
</feature>
<feature type="helix" evidence="7">
    <location>
        <begin position="268"/>
        <end position="270"/>
    </location>
</feature>
<feature type="helix" evidence="7">
    <location>
        <begin position="272"/>
        <end position="285"/>
    </location>
</feature>
<feature type="turn" evidence="7">
    <location>
        <begin position="286"/>
        <end position="289"/>
    </location>
</feature>
<feature type="strand" evidence="7">
    <location>
        <begin position="290"/>
        <end position="292"/>
    </location>
</feature>
<feature type="strand" evidence="7">
    <location>
        <begin position="296"/>
        <end position="299"/>
    </location>
</feature>
<feature type="helix" evidence="7">
    <location>
        <begin position="305"/>
        <end position="307"/>
    </location>
</feature>
<feature type="strand" evidence="6">
    <location>
        <begin position="310"/>
        <end position="312"/>
    </location>
</feature>
<feature type="helix" evidence="7">
    <location>
        <begin position="314"/>
        <end position="321"/>
    </location>
</feature>
<feature type="strand" evidence="7">
    <location>
        <begin position="326"/>
        <end position="330"/>
    </location>
</feature>
<feature type="strand" evidence="7">
    <location>
        <begin position="333"/>
        <end position="336"/>
    </location>
</feature>
<feature type="helix" evidence="7">
    <location>
        <begin position="341"/>
        <end position="351"/>
    </location>
</feature>
<feature type="strand" evidence="7">
    <location>
        <begin position="355"/>
        <end position="359"/>
    </location>
</feature>
<feature type="helix" evidence="7">
    <location>
        <begin position="384"/>
        <end position="386"/>
    </location>
</feature>
<feature type="strand" evidence="7">
    <location>
        <begin position="387"/>
        <end position="392"/>
    </location>
</feature>
<feature type="helix" evidence="7">
    <location>
        <begin position="399"/>
        <end position="401"/>
    </location>
</feature>
<feature type="helix" evidence="7">
    <location>
        <begin position="402"/>
        <end position="413"/>
    </location>
</feature>
<feature type="helix" evidence="7">
    <location>
        <begin position="415"/>
        <end position="417"/>
    </location>
</feature>
<feature type="helix" evidence="7">
    <location>
        <begin position="420"/>
        <end position="431"/>
    </location>
</feature>
<feature type="helix" evidence="7">
    <location>
        <begin position="433"/>
        <end position="435"/>
    </location>
</feature>
<feature type="helix" evidence="7">
    <location>
        <begin position="436"/>
        <end position="444"/>
    </location>
</feature>
<feature type="turn" evidence="7">
    <location>
        <begin position="462"/>
        <end position="464"/>
    </location>
</feature>
<feature type="helix" evidence="7">
    <location>
        <begin position="465"/>
        <end position="477"/>
    </location>
</feature>
<feature type="helix" evidence="7">
    <location>
        <begin position="483"/>
        <end position="505"/>
    </location>
</feature>
<feature type="helix" evidence="7">
    <location>
        <begin position="510"/>
        <end position="538"/>
    </location>
</feature>
<feature type="helix" evidence="7">
    <location>
        <begin position="542"/>
        <end position="565"/>
    </location>
</feature>
<feature type="strand" evidence="7">
    <location>
        <begin position="570"/>
        <end position="572"/>
    </location>
</feature>
<feature type="turn" evidence="7">
    <location>
        <begin position="579"/>
        <end position="581"/>
    </location>
</feature>
<feature type="helix" evidence="7">
    <location>
        <begin position="582"/>
        <end position="601"/>
    </location>
</feature>
<feature type="strand" evidence="7">
    <location>
        <begin position="613"/>
        <end position="615"/>
    </location>
</feature>
<feature type="helix" evidence="8">
    <location>
        <begin position="623"/>
        <end position="625"/>
    </location>
</feature>
<feature type="strand" evidence="7">
    <location>
        <begin position="628"/>
        <end position="631"/>
    </location>
</feature>
<feature type="strand" evidence="7">
    <location>
        <begin position="634"/>
        <end position="637"/>
    </location>
</feature>
<feature type="strand" evidence="8">
    <location>
        <begin position="644"/>
        <end position="646"/>
    </location>
</feature>
<feature type="strand" evidence="7">
    <location>
        <begin position="653"/>
        <end position="667"/>
    </location>
</feature>
<feature type="strand" evidence="9">
    <location>
        <begin position="681"/>
        <end position="688"/>
    </location>
</feature>
<feature type="strand" evidence="8">
    <location>
        <begin position="690"/>
        <end position="692"/>
    </location>
</feature>
<feature type="strand" evidence="9">
    <location>
        <begin position="695"/>
        <end position="697"/>
    </location>
</feature>
<feature type="strand" evidence="7">
    <location>
        <begin position="702"/>
        <end position="704"/>
    </location>
</feature>
<feature type="strand" evidence="7">
    <location>
        <begin position="709"/>
        <end position="714"/>
    </location>
</feature>
<feature type="strand" evidence="8">
    <location>
        <begin position="719"/>
        <end position="721"/>
    </location>
</feature>
<feature type="strand" evidence="8">
    <location>
        <begin position="723"/>
        <end position="725"/>
    </location>
</feature>
<feature type="strand" evidence="7">
    <location>
        <begin position="730"/>
        <end position="734"/>
    </location>
</feature>
<dbReference type="EC" id="3.2.1.169" evidence="3"/>
<dbReference type="EMBL" id="AE015928">
    <property type="protein sequence ID" value="AAO79500.1"/>
    <property type="molecule type" value="Genomic_DNA"/>
</dbReference>
<dbReference type="RefSeq" id="NP_813306.1">
    <property type="nucleotide sequence ID" value="NC_004663.1"/>
</dbReference>
<dbReference type="RefSeq" id="WP_011109237.1">
    <property type="nucleotide sequence ID" value="NC_004663.1"/>
</dbReference>
<dbReference type="PDB" id="2CHN">
    <property type="method" value="X-ray"/>
    <property type="resolution" value="1.95 A"/>
    <property type="chains" value="A/B=22-737"/>
</dbReference>
<dbReference type="PDB" id="2CHO">
    <property type="method" value="X-ray"/>
    <property type="resolution" value="1.85 A"/>
    <property type="chains" value="A/B=22-737"/>
</dbReference>
<dbReference type="PDB" id="2J47">
    <property type="method" value="X-ray"/>
    <property type="resolution" value="1.98 A"/>
    <property type="chains" value="A=22-737"/>
</dbReference>
<dbReference type="PDB" id="2J4G">
    <property type="method" value="X-ray"/>
    <property type="resolution" value="2.25 A"/>
    <property type="chains" value="A/B=23-737"/>
</dbReference>
<dbReference type="PDB" id="2JIW">
    <property type="method" value="X-ray"/>
    <property type="resolution" value="1.95 A"/>
    <property type="chains" value="A/B=23-737"/>
</dbReference>
<dbReference type="PDB" id="2VVN">
    <property type="method" value="X-ray"/>
    <property type="resolution" value="1.85 A"/>
    <property type="chains" value="A/B=1-737"/>
</dbReference>
<dbReference type="PDB" id="2VVS">
    <property type="method" value="X-ray"/>
    <property type="resolution" value="2.24 A"/>
    <property type="chains" value="A=1-737"/>
</dbReference>
<dbReference type="PDB" id="2W4X">
    <property type="method" value="X-ray"/>
    <property type="resolution" value="2.42 A"/>
    <property type="chains" value="A=22-737"/>
</dbReference>
<dbReference type="PDB" id="2W66">
    <property type="method" value="X-ray"/>
    <property type="resolution" value="2.27 A"/>
    <property type="chains" value="A/B=22-737"/>
</dbReference>
<dbReference type="PDB" id="2W67">
    <property type="method" value="X-ray"/>
    <property type="resolution" value="2.25 A"/>
    <property type="chains" value="A/B=22-737"/>
</dbReference>
<dbReference type="PDB" id="2WCA">
    <property type="method" value="X-ray"/>
    <property type="resolution" value="2.30 A"/>
    <property type="chains" value="A=22-737"/>
</dbReference>
<dbReference type="PDB" id="2WZH">
    <property type="method" value="X-ray"/>
    <property type="resolution" value="2.20 A"/>
    <property type="chains" value="A=1-737"/>
</dbReference>
<dbReference type="PDB" id="2WZI">
    <property type="method" value="X-ray"/>
    <property type="resolution" value="1.90 A"/>
    <property type="chains" value="A/B=1-737"/>
</dbReference>
<dbReference type="PDB" id="2X0H">
    <property type="method" value="X-ray"/>
    <property type="resolution" value="2.21 A"/>
    <property type="chains" value="A/B=1-737"/>
</dbReference>
<dbReference type="PDB" id="2XJ7">
    <property type="method" value="X-ray"/>
    <property type="resolution" value="2.00 A"/>
    <property type="chains" value="A/B=22-737"/>
</dbReference>
<dbReference type="PDB" id="2XM1">
    <property type="method" value="X-ray"/>
    <property type="resolution" value="2.00 A"/>
    <property type="chains" value="A/B=22-737"/>
</dbReference>
<dbReference type="PDB" id="2XM2">
    <property type="method" value="X-ray"/>
    <property type="resolution" value="1.95 A"/>
    <property type="chains" value="A/B=22-737"/>
</dbReference>
<dbReference type="PDB" id="4AIS">
    <property type="method" value="X-ray"/>
    <property type="resolution" value="2.00 A"/>
    <property type="chains" value="A/B=1-737"/>
</dbReference>
<dbReference type="PDB" id="4AIU">
    <property type="method" value="X-ray"/>
    <property type="resolution" value="2.25 A"/>
    <property type="chains" value="A=1-737"/>
</dbReference>
<dbReference type="PDB" id="4UR9">
    <property type="method" value="X-ray"/>
    <property type="resolution" value="2.20 A"/>
    <property type="chains" value="A/B=22-737"/>
</dbReference>
<dbReference type="PDB" id="5ABE">
    <property type="method" value="X-ray"/>
    <property type="resolution" value="2.00 A"/>
    <property type="chains" value="A/B=22-737"/>
</dbReference>
<dbReference type="PDB" id="5ABF">
    <property type="method" value="X-ray"/>
    <property type="resolution" value="2.10 A"/>
    <property type="chains" value="A/B=22-737"/>
</dbReference>
<dbReference type="PDB" id="5ABG">
    <property type="method" value="X-ray"/>
    <property type="resolution" value="2.00 A"/>
    <property type="chains" value="A/B=22-737"/>
</dbReference>
<dbReference type="PDB" id="5ABH">
    <property type="method" value="X-ray"/>
    <property type="resolution" value="1.95 A"/>
    <property type="chains" value="A/B=22-737"/>
</dbReference>
<dbReference type="PDB" id="5FKY">
    <property type="method" value="X-ray"/>
    <property type="resolution" value="1.80 A"/>
    <property type="chains" value="A/B=22-737"/>
</dbReference>
<dbReference type="PDB" id="5FL0">
    <property type="method" value="X-ray"/>
    <property type="resolution" value="1.95 A"/>
    <property type="chains" value="A/B=22-737"/>
</dbReference>
<dbReference type="PDB" id="5FL1">
    <property type="method" value="X-ray"/>
    <property type="resolution" value="1.95 A"/>
    <property type="chains" value="A/B=22-737"/>
</dbReference>
<dbReference type="PDB" id="5MI4">
    <property type="method" value="X-ray"/>
    <property type="resolution" value="1.80 A"/>
    <property type="chains" value="A=23-737"/>
</dbReference>
<dbReference type="PDB" id="5MI5">
    <property type="method" value="X-ray"/>
    <property type="resolution" value="2.15 A"/>
    <property type="chains" value="A=23-737"/>
</dbReference>
<dbReference type="PDB" id="5MI6">
    <property type="method" value="X-ray"/>
    <property type="resolution" value="2.00 A"/>
    <property type="chains" value="A=23-737"/>
</dbReference>
<dbReference type="PDB" id="5MI7">
    <property type="method" value="X-ray"/>
    <property type="resolution" value="2.10 A"/>
    <property type="chains" value="A=23-737"/>
</dbReference>
<dbReference type="PDB" id="7K41">
    <property type="method" value="X-ray"/>
    <property type="resolution" value="2.00 A"/>
    <property type="chains" value="A=22-737"/>
</dbReference>
<dbReference type="PDB" id="7OU8">
    <property type="method" value="X-ray"/>
    <property type="resolution" value="1.50 A"/>
    <property type="chains" value="AAA/BBB=1-737"/>
</dbReference>
<dbReference type="PDBsum" id="2CHN"/>
<dbReference type="PDBsum" id="2CHO"/>
<dbReference type="PDBsum" id="2J47"/>
<dbReference type="PDBsum" id="2J4G"/>
<dbReference type="PDBsum" id="2JIW"/>
<dbReference type="PDBsum" id="2VVN"/>
<dbReference type="PDBsum" id="2VVS"/>
<dbReference type="PDBsum" id="2W4X"/>
<dbReference type="PDBsum" id="2W66"/>
<dbReference type="PDBsum" id="2W67"/>
<dbReference type="PDBsum" id="2WCA"/>
<dbReference type="PDBsum" id="2WZH"/>
<dbReference type="PDBsum" id="2WZI"/>
<dbReference type="PDBsum" id="2X0H"/>
<dbReference type="PDBsum" id="2XJ7"/>
<dbReference type="PDBsum" id="2XM1"/>
<dbReference type="PDBsum" id="2XM2"/>
<dbReference type="PDBsum" id="4AIS"/>
<dbReference type="PDBsum" id="4AIU"/>
<dbReference type="PDBsum" id="4UR9"/>
<dbReference type="PDBsum" id="5ABE"/>
<dbReference type="PDBsum" id="5ABF"/>
<dbReference type="PDBsum" id="5ABG"/>
<dbReference type="PDBsum" id="5ABH"/>
<dbReference type="PDBsum" id="5FKY"/>
<dbReference type="PDBsum" id="5FL0"/>
<dbReference type="PDBsum" id="5FL1"/>
<dbReference type="PDBsum" id="5MI4"/>
<dbReference type="PDBsum" id="5MI5"/>
<dbReference type="PDBsum" id="5MI6"/>
<dbReference type="PDBsum" id="5MI7"/>
<dbReference type="PDBsum" id="7K41"/>
<dbReference type="PDBsum" id="7OU8"/>
<dbReference type="SMR" id="Q89ZI2"/>
<dbReference type="DIP" id="DIP-29067N"/>
<dbReference type="STRING" id="226186.BT_4395"/>
<dbReference type="DrugBank" id="DB08255">
    <property type="generic name" value="(3AR,5R,6S,7R,7AR)-5-(HYDROXYMETHYL)-2-PROPYL-5,6,7,7A-TETRAHYDRO-3AH-PYRANO[3,2-D][1,3]THIAZOLE-6,7-DIOL"/>
</dbReference>
<dbReference type="DrugBank" id="DB07432">
    <property type="generic name" value="[[(3R,4R,5S,6R)-3-(butanoylamino)-4,5-dihydroxy-6-(hydroxymethyl)oxan-2-ylidene]amino] N-phenylcarbamate"/>
</dbReference>
<dbReference type="DrugBank" id="DB00428">
    <property type="generic name" value="Streptozocin"/>
</dbReference>
<dbReference type="CAZy" id="GH84">
    <property type="family name" value="Glycoside Hydrolase Family 84"/>
</dbReference>
<dbReference type="PaxDb" id="226186-BT_4395"/>
<dbReference type="EnsemblBacteria" id="AAO79500">
    <property type="protein sequence ID" value="AAO79500"/>
    <property type="gene ID" value="BT_4395"/>
</dbReference>
<dbReference type="GeneID" id="60925570"/>
<dbReference type="KEGG" id="bth:BT_4395"/>
<dbReference type="PATRIC" id="fig|226186.12.peg.4474"/>
<dbReference type="eggNOG" id="COG3525">
    <property type="taxonomic scope" value="Bacteria"/>
</dbReference>
<dbReference type="HOGENOM" id="CLU_001501_2_0_10"/>
<dbReference type="InParanoid" id="Q89ZI2"/>
<dbReference type="OrthoDB" id="9760892at2"/>
<dbReference type="BRENDA" id="3.2.1.169">
    <property type="organism ID" value="709"/>
</dbReference>
<dbReference type="EvolutionaryTrace" id="Q89ZI2"/>
<dbReference type="PRO" id="PR:Q89ZI2"/>
<dbReference type="Proteomes" id="UP000001414">
    <property type="component" value="Chromosome"/>
</dbReference>
<dbReference type="GO" id="GO:0102571">
    <property type="term" value="F:[protein]-3-O-(N-acetyl-D-glucosaminyl)-L-serine/L-threonine O-N-acetyl-alpha-D-glucosaminase activity"/>
    <property type="evidence" value="ECO:0007669"/>
    <property type="project" value="UniProtKB-EC"/>
</dbReference>
<dbReference type="GO" id="GO:0016231">
    <property type="term" value="F:beta-N-acetylglucosaminidase activity"/>
    <property type="evidence" value="ECO:0000314"/>
    <property type="project" value="UniProtKB"/>
</dbReference>
<dbReference type="GO" id="GO:0042802">
    <property type="term" value="F:identical protein binding"/>
    <property type="evidence" value="ECO:0000353"/>
    <property type="project" value="IntAct"/>
</dbReference>
<dbReference type="GO" id="GO:0005975">
    <property type="term" value="P:carbohydrate metabolic process"/>
    <property type="evidence" value="ECO:0000314"/>
    <property type="project" value="UniProtKB"/>
</dbReference>
<dbReference type="GO" id="GO:0006517">
    <property type="term" value="P:protein deglycosylation"/>
    <property type="evidence" value="ECO:0000315"/>
    <property type="project" value="UniProtKB"/>
</dbReference>
<dbReference type="FunFam" id="3.20.20.80:FF:000009">
    <property type="entry name" value="O-GlcNAcase BT_4395"/>
    <property type="match status" value="1"/>
</dbReference>
<dbReference type="Gene3D" id="3.30.379.10">
    <property type="entry name" value="Chitobiase/beta-hexosaminidase domain 2-like"/>
    <property type="match status" value="1"/>
</dbReference>
<dbReference type="Gene3D" id="3.20.20.80">
    <property type="entry name" value="Glycosidases"/>
    <property type="match status" value="1"/>
</dbReference>
<dbReference type="Gene3D" id="2.60.40.1180">
    <property type="entry name" value="Golgi alpha-mannosidase II"/>
    <property type="match status" value="1"/>
</dbReference>
<dbReference type="Gene3D" id="1.20.58.460">
    <property type="entry name" value="Hyaluronidase post-catalytic domain-like"/>
    <property type="match status" value="1"/>
</dbReference>
<dbReference type="InterPro" id="IPR049478">
    <property type="entry name" value="BT_4395-like_hel"/>
</dbReference>
<dbReference type="InterPro" id="IPR013780">
    <property type="entry name" value="Glyco_hydro_b"/>
</dbReference>
<dbReference type="InterPro" id="IPR017853">
    <property type="entry name" value="Glycoside_hydrolase_SF"/>
</dbReference>
<dbReference type="InterPro" id="IPR051822">
    <property type="entry name" value="Glycosyl_Hydrolase_84"/>
</dbReference>
<dbReference type="InterPro" id="IPR029018">
    <property type="entry name" value="Hex-like_dom2"/>
</dbReference>
<dbReference type="InterPro" id="IPR015882">
    <property type="entry name" value="HEX_bac_N"/>
</dbReference>
<dbReference type="InterPro" id="IPR048162">
    <property type="entry name" value="O-GlcNAcase_BT_4395-like"/>
</dbReference>
<dbReference type="InterPro" id="IPR011496">
    <property type="entry name" value="O-GlcNAcase_cat"/>
</dbReference>
<dbReference type="NCBIfam" id="NF041654">
    <property type="entry name" value="GlcNAcase"/>
    <property type="match status" value="1"/>
</dbReference>
<dbReference type="PANTHER" id="PTHR13170">
    <property type="entry name" value="O-GLCNACASE"/>
    <property type="match status" value="1"/>
</dbReference>
<dbReference type="PANTHER" id="PTHR13170:SF16">
    <property type="entry name" value="PROTEIN O-GLCNACASE"/>
    <property type="match status" value="1"/>
</dbReference>
<dbReference type="Pfam" id="PF18344">
    <property type="entry name" value="CBM32"/>
    <property type="match status" value="1"/>
</dbReference>
<dbReference type="Pfam" id="PF02838">
    <property type="entry name" value="Glyco_hydro_20b"/>
    <property type="match status" value="1"/>
</dbReference>
<dbReference type="Pfam" id="PF21809">
    <property type="entry name" value="Glyco_hydro_84_hel"/>
    <property type="match status" value="1"/>
</dbReference>
<dbReference type="Pfam" id="PF07555">
    <property type="entry name" value="NAGidase"/>
    <property type="match status" value="1"/>
</dbReference>
<dbReference type="SUPFAM" id="SSF51445">
    <property type="entry name" value="(Trans)glycosidases"/>
    <property type="match status" value="1"/>
</dbReference>
<dbReference type="SUPFAM" id="SSF55545">
    <property type="entry name" value="beta-N-acetylhexosaminidase-like domain"/>
    <property type="match status" value="1"/>
</dbReference>
<dbReference type="SUPFAM" id="SSF140657">
    <property type="entry name" value="Hyaluronidase post-catalytic domain-like"/>
    <property type="match status" value="1"/>
</dbReference>
<dbReference type="PROSITE" id="PS52009">
    <property type="entry name" value="GH84"/>
    <property type="match status" value="1"/>
</dbReference>
<organism>
    <name type="scientific">Bacteroides thetaiotaomicron (strain ATCC 29148 / DSM 2079 / JCM 5827 / CCUG 10774 / NCTC 10582 / VPI-5482 / E50)</name>
    <dbReference type="NCBI Taxonomy" id="226186"/>
    <lineage>
        <taxon>Bacteria</taxon>
        <taxon>Pseudomonadati</taxon>
        <taxon>Bacteroidota</taxon>
        <taxon>Bacteroidia</taxon>
        <taxon>Bacteroidales</taxon>
        <taxon>Bacteroidaceae</taxon>
        <taxon>Bacteroides</taxon>
    </lineage>
</organism>
<keyword id="KW-0002">3D-structure</keyword>
<keyword id="KW-0326">Glycosidase</keyword>
<keyword id="KW-0378">Hydrolase</keyword>
<keyword id="KW-1185">Reference proteome</keyword>
<keyword id="KW-0732">Signal</keyword>
<reference evidence="5" key="1">
    <citation type="journal article" date="2003" name="Science">
        <title>A genomic view of the human-Bacteroides thetaiotaomicron symbiosis.</title>
        <authorList>
            <person name="Xu J."/>
            <person name="Bjursell M.K."/>
            <person name="Himrod J."/>
            <person name="Deng S."/>
            <person name="Carmichael L.K."/>
            <person name="Chiang H.C."/>
            <person name="Hooper L.V."/>
            <person name="Gordon J.I."/>
        </authorList>
    </citation>
    <scope>NUCLEOTIDE SEQUENCE [LARGE SCALE GENOMIC DNA]</scope>
    <source>
        <strain>ATCC 29148 / DSM 2079 / JCM 5827 / CCUG 10774 / NCTC 10582 / VPI-5482 / E50</strain>
    </source>
</reference>
<reference evidence="4" key="2">
    <citation type="journal article" date="2006" name="Nat. Struct. Mol. Biol.">
        <title>Structure and mechanism of a bacterial beta-glucosaminidase having O-GlcNAcase activity.</title>
        <authorList>
            <person name="Dennis R.J."/>
            <person name="Taylor E.J."/>
            <person name="Macauley M.S."/>
            <person name="Stubbs K.A."/>
            <person name="Turkenburg J.P."/>
            <person name="Hart S.J."/>
            <person name="Black G.N."/>
            <person name="Vocadlo D.J."/>
            <person name="Davies G.J."/>
        </authorList>
    </citation>
    <scope>X-RAY CRYSTALLOGRAPHY (1.85 ANGSTROMS) OF 22-737 IN COMPLEX WITH SUBSTRATE ANALOG</scope>
    <scope>CATALYTIC ACTIVITY</scope>
    <scope>SUBUNIT</scope>
    <scope>BIOPHYSICOCHEMICAL PROPERTIES</scope>
    <scope>MUTAGENESIS OF TYR-158; ASP-263; ASP-264; TYR-303 AND ASN-393</scope>
    <scope>FUNCTION</scope>
    <scope>ACTIVE SITE</scope>
    <source>
        <strain evidence="3">ATCC 29148 / DSM 2079 / JCM 5827 / CCUG 10774 / NCTC 10582 / VPI-5482 / E50</strain>
    </source>
</reference>
<accession>Q89ZI2</accession>
<protein>
    <recommendedName>
        <fullName>O-GlcNAcase BT_4395</fullName>
        <ecNumber evidence="3">3.2.1.169</ecNumber>
    </recommendedName>
    <alternativeName>
        <fullName>Beta-N-acetylglucosaminidase</fullName>
    </alternativeName>
    <alternativeName>
        <fullName>Beta-N-acetylhexosaminidase</fullName>
    </alternativeName>
    <alternativeName>
        <fullName>Beta-hexosaminidase</fullName>
    </alternativeName>
    <alternativeName>
        <fullName>Hexosaminidase B</fullName>
    </alternativeName>
    <alternativeName>
        <fullName>N-acetyl-beta-glucosaminidase</fullName>
    </alternativeName>
</protein>